<keyword id="KW-0175">Coiled coil</keyword>
<keyword id="KW-0963">Cytoplasm</keyword>
<keyword id="KW-0597">Phosphoprotein</keyword>
<organism>
    <name type="scientific">Saccharomyces cerevisiae (strain JAY291)</name>
    <name type="common">Baker's yeast</name>
    <dbReference type="NCBI Taxonomy" id="574961"/>
    <lineage>
        <taxon>Eukaryota</taxon>
        <taxon>Fungi</taxon>
        <taxon>Dikarya</taxon>
        <taxon>Ascomycota</taxon>
        <taxon>Saccharomycotina</taxon>
        <taxon>Saccharomycetes</taxon>
        <taxon>Saccharomycetales</taxon>
        <taxon>Saccharomycetaceae</taxon>
        <taxon>Saccharomyces</taxon>
    </lineage>
</organism>
<comment type="subcellular location">
    <subcellularLocation>
        <location evidence="1">Cytoplasm</location>
    </subcellularLocation>
</comment>
<comment type="similarity">
    <text evidence="5">Belongs to the TDA11 family.</text>
</comment>
<name>TDA11_YEAS2</name>
<dbReference type="EMBL" id="ACFL01000017">
    <property type="protein sequence ID" value="EEU08889.1"/>
    <property type="molecule type" value="Genomic_DNA"/>
</dbReference>
<dbReference type="SMR" id="C7GJX9"/>
<dbReference type="Proteomes" id="UP000008073">
    <property type="component" value="Unassembled WGS sequence"/>
</dbReference>
<dbReference type="GO" id="GO:0005737">
    <property type="term" value="C:cytoplasm"/>
    <property type="evidence" value="ECO:0007669"/>
    <property type="project" value="UniProtKB-SubCell"/>
</dbReference>
<dbReference type="InterPro" id="IPR031388">
    <property type="entry name" value="Tda11"/>
</dbReference>
<dbReference type="Pfam" id="PF17084">
    <property type="entry name" value="TDA11"/>
    <property type="match status" value="1"/>
</dbReference>
<protein>
    <recommendedName>
        <fullName>Topoisomerase I damage affected protein 11</fullName>
    </recommendedName>
</protein>
<reference key="1">
    <citation type="journal article" date="2009" name="Genome Res.">
        <title>Genome structure of a Saccharomyces cerevisiae strain widely used in bioethanol production.</title>
        <authorList>
            <person name="Argueso J.L."/>
            <person name="Carazzolle M.F."/>
            <person name="Mieczkowski P.A."/>
            <person name="Duarte F.M."/>
            <person name="Netto O.V.C."/>
            <person name="Missawa S.K."/>
            <person name="Galzerani F."/>
            <person name="Costa G.G.L."/>
            <person name="Vidal R.O."/>
            <person name="Noronha M.F."/>
            <person name="Dominska M."/>
            <person name="Andrietta M.G.S."/>
            <person name="Andrietta S.R."/>
            <person name="Cunha A.F."/>
            <person name="Gomes L.H."/>
            <person name="Tavares F.C.A."/>
            <person name="Alcarde A.R."/>
            <person name="Dietrich F.S."/>
            <person name="McCusker J.H."/>
            <person name="Petes T.D."/>
            <person name="Pereira G.A.G."/>
        </authorList>
    </citation>
    <scope>NUCLEOTIDE SEQUENCE [LARGE SCALE GENOMIC DNA]</scope>
    <source>
        <strain>JAY291</strain>
    </source>
</reference>
<evidence type="ECO:0000250" key="1"/>
<evidence type="ECO:0000250" key="2">
    <source>
        <dbReference type="UniProtKB" id="P38854"/>
    </source>
</evidence>
<evidence type="ECO:0000255" key="3"/>
<evidence type="ECO:0000256" key="4">
    <source>
        <dbReference type="SAM" id="MobiDB-lite"/>
    </source>
</evidence>
<evidence type="ECO:0000305" key="5"/>
<feature type="chain" id="PRO_0000410762" description="Topoisomerase I damage affected protein 11">
    <location>
        <begin position="1"/>
        <end position="504"/>
    </location>
</feature>
<feature type="region of interest" description="Disordered" evidence="4">
    <location>
        <begin position="32"/>
        <end position="62"/>
    </location>
</feature>
<feature type="region of interest" description="Disordered" evidence="4">
    <location>
        <begin position="252"/>
        <end position="306"/>
    </location>
</feature>
<feature type="region of interest" description="Disordered" evidence="4">
    <location>
        <begin position="332"/>
        <end position="377"/>
    </location>
</feature>
<feature type="region of interest" description="Disordered" evidence="4">
    <location>
        <begin position="400"/>
        <end position="504"/>
    </location>
</feature>
<feature type="coiled-coil region" evidence="3">
    <location>
        <begin position="179"/>
        <end position="231"/>
    </location>
</feature>
<feature type="compositionally biased region" description="Polar residues" evidence="4">
    <location>
        <begin position="257"/>
        <end position="287"/>
    </location>
</feature>
<feature type="compositionally biased region" description="Basic and acidic residues" evidence="4">
    <location>
        <begin position="290"/>
        <end position="301"/>
    </location>
</feature>
<feature type="compositionally biased region" description="Polar residues" evidence="4">
    <location>
        <begin position="332"/>
        <end position="359"/>
    </location>
</feature>
<feature type="compositionally biased region" description="Polar residues" evidence="4">
    <location>
        <begin position="368"/>
        <end position="377"/>
    </location>
</feature>
<feature type="compositionally biased region" description="Basic and acidic residues" evidence="4">
    <location>
        <begin position="403"/>
        <end position="421"/>
    </location>
</feature>
<feature type="compositionally biased region" description="Basic residues" evidence="4">
    <location>
        <begin position="470"/>
        <end position="479"/>
    </location>
</feature>
<feature type="compositionally biased region" description="Polar residues" evidence="4">
    <location>
        <begin position="491"/>
        <end position="504"/>
    </location>
</feature>
<feature type="modified residue" description="Phosphothreonine" evidence="2">
    <location>
        <position position="236"/>
    </location>
</feature>
<feature type="modified residue" description="Phosphoserine" evidence="2">
    <location>
        <position position="244"/>
    </location>
</feature>
<feature type="modified residue" description="Phosphoserine" evidence="2">
    <location>
        <position position="286"/>
    </location>
</feature>
<proteinExistence type="inferred from homology"/>
<gene>
    <name type="primary">TDA11</name>
    <name type="ORF">C1Q_00499</name>
</gene>
<sequence length="504" mass="56314">MNKFDEFIESNEKDLDVDTSTRNSIISMSPVRKTGRKIRSASSNGYRLEHHRTSSAGSMHSQRLMTPTRLNDQDHPLQAKPDARRVVTRHSSVSVPNAMSKRRSLIQPMVVPTTPESQNNLPSVSHSEGSYGIPLESTTVLSSEQAMASGLRRSRNGSSQSVNSMIATTIPTNGVDVSALLQSLATKELELLECKQKIEDLKKQTQHEEQNYTRRARELHELKEQVSKHLDPSLNTPVKNRAFSPVYQNIPLESRTENAGNSSLPSSVSKPKNMGHQSTNQSRSVSPQDIQERRQRDDSSDSSKQSLWSKPLALFNQFDKIIQHEIERTLNWDDSLSGTPEVQEGTPTSNSESSAQQYDNEAPGARQKSPSQGSVSRSLWSFVSDVKAGLLGIEEENDNDVITDNRCDPVYKSDRQHEQKKSTHKITNRGQAEDSGDDSSLNMRKFKTTTKFQKDNAGNNSLTDESGHRTREKKSKRSSNKLSFIGEPDNDNSSVKNSVEMTDF</sequence>
<accession>C7GJX9</accession>